<sequence length="128" mass="13975">MNVYIPILVLAALAAAFAVVSVVIASLVGPSRFNRSKQAAYECGIEPASTGARTSIGPGAASGQRFPIKYYLTAMLFIVFDIEIVFLYPWAVSYDSLGTFALVEMAIFMLTVFVAYAYVWRRGGLTWD</sequence>
<keyword id="KW-1003">Cell membrane</keyword>
<keyword id="KW-0472">Membrane</keyword>
<keyword id="KW-0520">NAD</keyword>
<keyword id="KW-0874">Quinone</keyword>
<keyword id="KW-1185">Reference proteome</keyword>
<keyword id="KW-1278">Translocase</keyword>
<keyword id="KW-0812">Transmembrane</keyword>
<keyword id="KW-1133">Transmembrane helix</keyword>
<keyword id="KW-0813">Transport</keyword>
<accession>P9WIW6</accession>
<accession>L0TDA2</accession>
<accession>P65563</accession>
<accession>P95181</accession>
<protein>
    <recommendedName>
        <fullName evidence="1">NADH-quinone oxidoreductase subunit A</fullName>
        <ecNumber evidence="1">7.1.1.-</ecNumber>
    </recommendedName>
    <alternativeName>
        <fullName evidence="1">NADH dehydrogenase I subunit A</fullName>
    </alternativeName>
    <alternativeName>
        <fullName evidence="1">NDH-1 subunit A</fullName>
    </alternativeName>
    <alternativeName>
        <fullName evidence="1">NUO1</fullName>
    </alternativeName>
</protein>
<evidence type="ECO:0000255" key="1">
    <source>
        <dbReference type="HAMAP-Rule" id="MF_01394"/>
    </source>
</evidence>
<comment type="function">
    <text evidence="1">NDH-1 shuttles electrons from NADH, via FMN and iron-sulfur (Fe-S) centers, to quinones in the respiratory chain. The immediate electron acceptor for the enzyme in this species is believed to be a menaquinone. Couples the redox reaction to proton translocation (for every two electrons transferred, four hydrogen ions are translocated across the cytoplasmic membrane), and thus conserves the redox energy in a proton gradient.</text>
</comment>
<comment type="catalytic activity">
    <reaction evidence="1">
        <text>a quinone + NADH + 5 H(+)(in) = a quinol + NAD(+) + 4 H(+)(out)</text>
        <dbReference type="Rhea" id="RHEA:57888"/>
        <dbReference type="ChEBI" id="CHEBI:15378"/>
        <dbReference type="ChEBI" id="CHEBI:24646"/>
        <dbReference type="ChEBI" id="CHEBI:57540"/>
        <dbReference type="ChEBI" id="CHEBI:57945"/>
        <dbReference type="ChEBI" id="CHEBI:132124"/>
    </reaction>
</comment>
<comment type="subunit">
    <text evidence="1">NDH-1 is composed of 14 different subunits. Subunits NuoA, H, J, K, L, M, N constitute the membrane sector of the complex.</text>
</comment>
<comment type="subcellular location">
    <subcellularLocation>
        <location evidence="1">Cell membrane</location>
        <topology evidence="1">Multi-pass membrane protein</topology>
    </subcellularLocation>
</comment>
<comment type="similarity">
    <text evidence="1">Belongs to the complex I subunit 3 family.</text>
</comment>
<dbReference type="EC" id="7.1.1.-" evidence="1"/>
<dbReference type="EMBL" id="AE000516">
    <property type="protein sequence ID" value="AAK47572.1"/>
    <property type="molecule type" value="Genomic_DNA"/>
</dbReference>
<dbReference type="PIR" id="B70647">
    <property type="entry name" value="B70647"/>
</dbReference>
<dbReference type="RefSeq" id="WP_003416417.1">
    <property type="nucleotide sequence ID" value="NZ_KK341227.1"/>
</dbReference>
<dbReference type="SMR" id="P9WIW6"/>
<dbReference type="KEGG" id="mtc:MT3233"/>
<dbReference type="PATRIC" id="fig|83331.31.peg.3481"/>
<dbReference type="HOGENOM" id="CLU_119549_0_0_11"/>
<dbReference type="Proteomes" id="UP000001020">
    <property type="component" value="Chromosome"/>
</dbReference>
<dbReference type="GO" id="GO:0030964">
    <property type="term" value="C:NADH dehydrogenase complex"/>
    <property type="evidence" value="ECO:0007669"/>
    <property type="project" value="TreeGrafter"/>
</dbReference>
<dbReference type="GO" id="GO:0005886">
    <property type="term" value="C:plasma membrane"/>
    <property type="evidence" value="ECO:0007669"/>
    <property type="project" value="UniProtKB-SubCell"/>
</dbReference>
<dbReference type="GO" id="GO:0008137">
    <property type="term" value="F:NADH dehydrogenase (ubiquinone) activity"/>
    <property type="evidence" value="ECO:0007669"/>
    <property type="project" value="InterPro"/>
</dbReference>
<dbReference type="GO" id="GO:0050136">
    <property type="term" value="F:NADH:ubiquinone reductase (non-electrogenic) activity"/>
    <property type="evidence" value="ECO:0007669"/>
    <property type="project" value="UniProtKB-UniRule"/>
</dbReference>
<dbReference type="GO" id="GO:0048038">
    <property type="term" value="F:quinone binding"/>
    <property type="evidence" value="ECO:0007669"/>
    <property type="project" value="UniProtKB-KW"/>
</dbReference>
<dbReference type="FunFam" id="1.20.58.1610:FF:000002">
    <property type="entry name" value="NADH-quinone oxidoreductase subunit A"/>
    <property type="match status" value="1"/>
</dbReference>
<dbReference type="Gene3D" id="1.20.58.1610">
    <property type="entry name" value="NADH:ubiquinone/plastoquinone oxidoreductase, chain 3"/>
    <property type="match status" value="1"/>
</dbReference>
<dbReference type="HAMAP" id="MF_01394">
    <property type="entry name" value="NDH1_NuoA"/>
    <property type="match status" value="1"/>
</dbReference>
<dbReference type="InterPro" id="IPR023043">
    <property type="entry name" value="NAD(P)H_OxRDtase_bac/plastid"/>
</dbReference>
<dbReference type="InterPro" id="IPR000440">
    <property type="entry name" value="NADH_UbQ/plastoQ_OxRdtase_su3"/>
</dbReference>
<dbReference type="InterPro" id="IPR038430">
    <property type="entry name" value="NDAH_ubi_oxred_su3_sf"/>
</dbReference>
<dbReference type="NCBIfam" id="NF005922">
    <property type="entry name" value="PRK07928.1"/>
    <property type="match status" value="1"/>
</dbReference>
<dbReference type="PANTHER" id="PTHR11058:SF22">
    <property type="entry name" value="NADH-QUINONE OXIDOREDUCTASE SUBUNIT A"/>
    <property type="match status" value="1"/>
</dbReference>
<dbReference type="PANTHER" id="PTHR11058">
    <property type="entry name" value="NADH-UBIQUINONE OXIDOREDUCTASE CHAIN 3"/>
    <property type="match status" value="1"/>
</dbReference>
<dbReference type="Pfam" id="PF00507">
    <property type="entry name" value="Oxidored_q4"/>
    <property type="match status" value="1"/>
</dbReference>
<name>NUOA_MYCTO</name>
<organism>
    <name type="scientific">Mycobacterium tuberculosis (strain CDC 1551 / Oshkosh)</name>
    <dbReference type="NCBI Taxonomy" id="83331"/>
    <lineage>
        <taxon>Bacteria</taxon>
        <taxon>Bacillati</taxon>
        <taxon>Actinomycetota</taxon>
        <taxon>Actinomycetes</taxon>
        <taxon>Mycobacteriales</taxon>
        <taxon>Mycobacteriaceae</taxon>
        <taxon>Mycobacterium</taxon>
        <taxon>Mycobacterium tuberculosis complex</taxon>
    </lineage>
</organism>
<reference key="1">
    <citation type="journal article" date="2002" name="J. Bacteriol.">
        <title>Whole-genome comparison of Mycobacterium tuberculosis clinical and laboratory strains.</title>
        <authorList>
            <person name="Fleischmann R.D."/>
            <person name="Alland D."/>
            <person name="Eisen J.A."/>
            <person name="Carpenter L."/>
            <person name="White O."/>
            <person name="Peterson J.D."/>
            <person name="DeBoy R.T."/>
            <person name="Dodson R.J."/>
            <person name="Gwinn M.L."/>
            <person name="Haft D.H."/>
            <person name="Hickey E.K."/>
            <person name="Kolonay J.F."/>
            <person name="Nelson W.C."/>
            <person name="Umayam L.A."/>
            <person name="Ermolaeva M.D."/>
            <person name="Salzberg S.L."/>
            <person name="Delcher A."/>
            <person name="Utterback T.R."/>
            <person name="Weidman J.F."/>
            <person name="Khouri H.M."/>
            <person name="Gill J."/>
            <person name="Mikula A."/>
            <person name="Bishai W."/>
            <person name="Jacobs W.R. Jr."/>
            <person name="Venter J.C."/>
            <person name="Fraser C.M."/>
        </authorList>
    </citation>
    <scope>NUCLEOTIDE SEQUENCE [LARGE SCALE GENOMIC DNA]</scope>
    <source>
        <strain>CDC 1551 / Oshkosh</strain>
    </source>
</reference>
<gene>
    <name evidence="1" type="primary">nuoA</name>
    <name type="ordered locus">MT3233</name>
</gene>
<proteinExistence type="inferred from homology"/>
<feature type="chain" id="PRO_0000427933" description="NADH-quinone oxidoreductase subunit A">
    <location>
        <begin position="1"/>
        <end position="128"/>
    </location>
</feature>
<feature type="transmembrane region" description="Helical" evidence="1">
    <location>
        <begin position="5"/>
        <end position="25"/>
    </location>
</feature>
<feature type="transmembrane region" description="Helical" evidence="1">
    <location>
        <begin position="72"/>
        <end position="92"/>
    </location>
</feature>
<feature type="transmembrane region" description="Helical" evidence="1">
    <location>
        <begin position="100"/>
        <end position="120"/>
    </location>
</feature>